<accession>Q5XK92</accession>
<proteinExistence type="evidence at transcript level"/>
<reference key="1">
    <citation type="submission" date="2004-09" db="EMBL/GenBank/DDBJ databases">
        <authorList>
            <consortium name="NIH - Xenopus Gene Collection (XGC) project"/>
        </authorList>
    </citation>
    <scope>NUCLEOTIDE SEQUENCE [LARGE SCALE MRNA]</scope>
    <source>
        <tissue>Embryo</tissue>
    </source>
</reference>
<organism>
    <name type="scientific">Xenopus laevis</name>
    <name type="common">African clawed frog</name>
    <dbReference type="NCBI Taxonomy" id="8355"/>
    <lineage>
        <taxon>Eukaryota</taxon>
        <taxon>Metazoa</taxon>
        <taxon>Chordata</taxon>
        <taxon>Craniata</taxon>
        <taxon>Vertebrata</taxon>
        <taxon>Euteleostomi</taxon>
        <taxon>Amphibia</taxon>
        <taxon>Batrachia</taxon>
        <taxon>Anura</taxon>
        <taxon>Pipoidea</taxon>
        <taxon>Pipidae</taxon>
        <taxon>Xenopodinae</taxon>
        <taxon>Xenopus</taxon>
        <taxon>Xenopus</taxon>
    </lineage>
</organism>
<dbReference type="EMBL" id="BC083020">
    <property type="protein sequence ID" value="AAH83020.1"/>
    <property type="molecule type" value="mRNA"/>
</dbReference>
<dbReference type="RefSeq" id="NP_001088140.1">
    <property type="nucleotide sequence ID" value="NM_001094671.1"/>
</dbReference>
<dbReference type="SMR" id="Q5XK92"/>
<dbReference type="BioGRID" id="104926">
    <property type="interactions" value="1"/>
</dbReference>
<dbReference type="IntAct" id="Q5XK92">
    <property type="interactions" value="1"/>
</dbReference>
<dbReference type="GeneID" id="494846"/>
<dbReference type="KEGG" id="xla:494846"/>
<dbReference type="AGR" id="Xenbase:XB-GENE-5926406"/>
<dbReference type="CTD" id="494846"/>
<dbReference type="Xenbase" id="XB-GENE-5926406">
    <property type="gene designation" value="cip2a.L"/>
</dbReference>
<dbReference type="OrthoDB" id="73401at2759"/>
<dbReference type="Proteomes" id="UP000186698">
    <property type="component" value="Chromosome 2L"/>
</dbReference>
<dbReference type="Bgee" id="494846">
    <property type="expression patterns" value="Expressed in blastula and 18 other cell types or tissues"/>
</dbReference>
<dbReference type="GO" id="GO:0005694">
    <property type="term" value="C:chromosome"/>
    <property type="evidence" value="ECO:0000250"/>
    <property type="project" value="UniProtKB"/>
</dbReference>
<dbReference type="GO" id="GO:0005737">
    <property type="term" value="C:cytoplasm"/>
    <property type="evidence" value="ECO:0007669"/>
    <property type="project" value="UniProtKB-SubCell"/>
</dbReference>
<dbReference type="GO" id="GO:0004864">
    <property type="term" value="F:protein phosphatase inhibitor activity"/>
    <property type="evidence" value="ECO:0000250"/>
    <property type="project" value="UniProtKB"/>
</dbReference>
<dbReference type="GO" id="GO:0051276">
    <property type="term" value="P:chromosome organization"/>
    <property type="evidence" value="ECO:0000250"/>
    <property type="project" value="UniProtKB"/>
</dbReference>
<dbReference type="GO" id="GO:0006974">
    <property type="term" value="P:DNA damage response"/>
    <property type="evidence" value="ECO:0000250"/>
    <property type="project" value="UniProtKB"/>
</dbReference>
<dbReference type="InterPro" id="IPR016024">
    <property type="entry name" value="ARM-type_fold"/>
</dbReference>
<dbReference type="InterPro" id="IPR042510">
    <property type="entry name" value="CIP2A"/>
</dbReference>
<dbReference type="InterPro" id="IPR048701">
    <property type="entry name" value="CIP2A_N"/>
</dbReference>
<dbReference type="PANTHER" id="PTHR23161">
    <property type="entry name" value="PROTEIN CIP2A"/>
    <property type="match status" value="1"/>
</dbReference>
<dbReference type="PANTHER" id="PTHR23161:SF2">
    <property type="entry name" value="PROTEIN CIP2A"/>
    <property type="match status" value="1"/>
</dbReference>
<dbReference type="Pfam" id="PF21044">
    <property type="entry name" value="CIP2A_N"/>
    <property type="match status" value="1"/>
</dbReference>
<dbReference type="SUPFAM" id="SSF48371">
    <property type="entry name" value="ARM repeat"/>
    <property type="match status" value="1"/>
</dbReference>
<comment type="function">
    <text evidence="1">Acts as an inhibitor of protein phosphatase PP2A (By similarity). Together with topbp1, plays an essential role in the response to genome instability generated by the presence of acentric chromosome fragments derived from shattered chromosomes within micronuclei (By similarity). The CIP2A-TOPBP1 complex tethers chromosome fragments during mitosis to ensure clustered segregation of the fragments to a single daughter cell nucleus, facilitating re-ligation with limited chromosome scattering and loss (By similarity).</text>
</comment>
<comment type="subunit">
    <text evidence="1">Homodimer (By similarity). Interacts with topbp1; forming the CIP2A-TOPBP1 complex (By similarity).</text>
</comment>
<comment type="subcellular location">
    <subcellularLocation>
        <location evidence="1">Cytoplasm</location>
    </subcellularLocation>
    <subcellularLocation>
        <location evidence="1">Chromosome</location>
    </subcellularLocation>
    <text evidence="1">Predominantly localizes within the cytoplasm (By similarity). Localizes to broken chromosomes within micronuclei during interphase and following chromothripsis (By similarity).</text>
</comment>
<comment type="similarity">
    <text evidence="3">Belongs to the CIP2A family.</text>
</comment>
<protein>
    <recommendedName>
        <fullName>Protein CIP2A homolog L</fullName>
    </recommendedName>
</protein>
<gene>
    <name type="primary">cip2a.L</name>
</gene>
<evidence type="ECO:0000250" key="1">
    <source>
        <dbReference type="UniProtKB" id="Q8TCG1"/>
    </source>
</evidence>
<evidence type="ECO:0000255" key="2"/>
<evidence type="ECO:0000305" key="3"/>
<name>CIP2A_XENLA</name>
<sequence>MDATSCMKSLLLAVAQYKTCKSDSNGGVLHRQLEVIIGLNLNRLFASNQILPSECLSSLIELLEDPNTSPAITLKTINLISSLAADSETGETLHATYNLTNVLAGLVHRYSSIINDPVLLQSIQLLQRLTYNVRVLHASINIEELIAFLMNRIQAPEDKLTMPCLGLMANLCRHNLSVQAHVKSLNKVKGFYRTLISFLAHTCLTVVVFALSVLASLTLNEEVGEKLFHSRNIHQTFQLIFNILVNGDGTLTRKYTVDLLMDLLKNPKIADYLTRYEHFNSCLHQVLGLLHGKDADSASKVLELLLAFCSVTSLRCILRQAVFDQAGKPGAGSGRLGPGTKSSEPAVSLVHWSSQSLEAPQNCALLALELFKEVFEDAIDAGSCQSAERFVDLLLPVILEQLQIPDHELDEALAKKRCERVAKALDVLIILCGEDVLKFRVTRILVVNRFVSMVDYQFSCSGVDTSTKMVDSEFFKTSTDVILKSLDLMSRIKQLVTNMEAAFYKILQDHRLITPLSFALTSKNRERVHAGLRILFEAAPLPGFPSLVLGESIAANNAYIQQETDCPPKRFAVQVTSNNCKTPQSSNIQSIDNSSTKMQDLILKLQTGMEIKDQANDVRISDIMDVYEQKLSALASKESRLQDLLEAKALALSQADRLIAQYRCQRAQAEAEARKLAALLKDTERRNEELSLLLKSQQIESERAKSDIEQLFQHSKKLQAVADEHEKLKISYADHLIKYELCEKQYKELQASYNLLTKQAETMKKLNDSLKVQNEQTIAQLNEVENQHKDLTKQLQDRDGKITNLQQKLKLLEEKIKTKQKEKEDMEETIDILRKELSKTEQARKELSIKASSLEVQKTQLEARLEEKEAVVKLQQEELNKHSHMIAMIHSLSGGKLNTENVNLSL</sequence>
<keyword id="KW-0158">Chromosome</keyword>
<keyword id="KW-0175">Coiled coil</keyword>
<keyword id="KW-0963">Cytoplasm</keyword>
<keyword id="KW-0227">DNA damage</keyword>
<keyword id="KW-1185">Reference proteome</keyword>
<feature type="chain" id="PRO_0000287144" description="Protein CIP2A homolog L">
    <location>
        <begin position="1"/>
        <end position="906"/>
    </location>
</feature>
<feature type="coiled-coil region" evidence="2">
    <location>
        <begin position="626"/>
        <end position="884"/>
    </location>
</feature>
<feature type="short sequence motif" description="Nuclear export signal" evidence="1">
    <location>
        <begin position="599"/>
        <end position="613"/>
    </location>
</feature>